<accession>B3PIB4</accession>
<gene>
    <name evidence="1" type="primary">leuS</name>
    <name type="ordered locus">CJA_0454</name>
</gene>
<keyword id="KW-0030">Aminoacyl-tRNA synthetase</keyword>
<keyword id="KW-0067">ATP-binding</keyword>
<keyword id="KW-0963">Cytoplasm</keyword>
<keyword id="KW-0436">Ligase</keyword>
<keyword id="KW-0547">Nucleotide-binding</keyword>
<keyword id="KW-0648">Protein biosynthesis</keyword>
<keyword id="KW-1185">Reference proteome</keyword>
<proteinExistence type="inferred from homology"/>
<reference key="1">
    <citation type="journal article" date="2008" name="J. Bacteriol.">
        <title>Insights into plant cell wall degradation from the genome sequence of the soil bacterium Cellvibrio japonicus.</title>
        <authorList>
            <person name="DeBoy R.T."/>
            <person name="Mongodin E.F."/>
            <person name="Fouts D.E."/>
            <person name="Tailford L.E."/>
            <person name="Khouri H."/>
            <person name="Emerson J.B."/>
            <person name="Mohamoud Y."/>
            <person name="Watkins K."/>
            <person name="Henrissat B."/>
            <person name="Gilbert H.J."/>
            <person name="Nelson K.E."/>
        </authorList>
    </citation>
    <scope>NUCLEOTIDE SEQUENCE [LARGE SCALE GENOMIC DNA]</scope>
    <source>
        <strain>Ueda107</strain>
    </source>
</reference>
<feature type="chain" id="PRO_1000091301" description="Leucine--tRNA ligase">
    <location>
        <begin position="1"/>
        <end position="864"/>
    </location>
</feature>
<feature type="short sequence motif" description="'HIGH' region">
    <location>
        <begin position="42"/>
        <end position="52"/>
    </location>
</feature>
<feature type="short sequence motif" description="'KMSKS' region">
    <location>
        <begin position="622"/>
        <end position="626"/>
    </location>
</feature>
<feature type="binding site" evidence="1">
    <location>
        <position position="625"/>
    </location>
    <ligand>
        <name>ATP</name>
        <dbReference type="ChEBI" id="CHEBI:30616"/>
    </ligand>
</feature>
<sequence length="864" mass="97610">MQEQYNPAEVEAQAQQYWEEHQSFNVIEDPGKEKFYCLAMFPYPSGKLHMGHVRNYTITDVIARYQRMQGKNVLHPMGWDAFGLPAENAALKHNTAPAKWTYSNTDHMRNQLKQLGFGFDWSRELTTCKPEYYQWEQWFFTRLYEKGLVYKKMSTVNWDPIDQTVLANEQVIDGRGWRSGALVERKEIPQWFIKITDYAEELLNDLDKLPNWPEQVKTMQRNWIGKSRGLEMRFDLQSPVGEFTSFDIYTTRPDTLMGVTYVSLAAEHPIAKYLADSNPALAQFIADCKVQSVAEADMATMEKKGMDTGIKALHPITGEPVAVWVANYVLMDYGSGAVMAVPAHDQRDYEFAQKYHLGITQVIAPQNGETIDLSQAAFTDKGVLVNSGEYDGLDFNAAFDAIASTLEMANKGRVKTNYRLRDWGVSRQRYWGAPIPMFNLPEGGEIPVPAHKLPILLPEEVVMNGVQSPIKADPEWKKDELDGQYVERETDTFDTFMESSWYYARYTCPNFTDGMINKAAADYWLPVDQYVGGIEHAILHLLYSRFFHKLMRDEGLVSGDEPFERLLCQGMVNAESFFIKSEGKENWIEPENVVIERDDKGRFIAAKHKITGDAVEFGGVIKMSKSKANGVDPESVINQYGADTVRLFTMFAAPPEQSLEWSDSGVEGASRFLRRLWKAVEGHINAGTPGKLDAASLPQQQKDLRRKTHETIQKVSDDYGRRQTFNTAIAAVMELLNETSKLSDRANPQGLAVEREALEAAILLLAPIVPHITQALWIELGNSGIPLNQPWPTLDESALVRSTIEVVVQVNGKLRGKIDAAVDAPKELLEQIAVQQENVQKFLEGVTVRKVIVVPNKLVNIVAN</sequence>
<comment type="catalytic activity">
    <reaction evidence="1">
        <text>tRNA(Leu) + L-leucine + ATP = L-leucyl-tRNA(Leu) + AMP + diphosphate</text>
        <dbReference type="Rhea" id="RHEA:11688"/>
        <dbReference type="Rhea" id="RHEA-COMP:9613"/>
        <dbReference type="Rhea" id="RHEA-COMP:9622"/>
        <dbReference type="ChEBI" id="CHEBI:30616"/>
        <dbReference type="ChEBI" id="CHEBI:33019"/>
        <dbReference type="ChEBI" id="CHEBI:57427"/>
        <dbReference type="ChEBI" id="CHEBI:78442"/>
        <dbReference type="ChEBI" id="CHEBI:78494"/>
        <dbReference type="ChEBI" id="CHEBI:456215"/>
        <dbReference type="EC" id="6.1.1.4"/>
    </reaction>
</comment>
<comment type="subcellular location">
    <subcellularLocation>
        <location evidence="1">Cytoplasm</location>
    </subcellularLocation>
</comment>
<comment type="similarity">
    <text evidence="1">Belongs to the class-I aminoacyl-tRNA synthetase family.</text>
</comment>
<name>SYL_CELJU</name>
<protein>
    <recommendedName>
        <fullName evidence="1">Leucine--tRNA ligase</fullName>
        <ecNumber evidence="1">6.1.1.4</ecNumber>
    </recommendedName>
    <alternativeName>
        <fullName evidence="1">Leucyl-tRNA synthetase</fullName>
        <shortName evidence="1">LeuRS</shortName>
    </alternativeName>
</protein>
<dbReference type="EC" id="6.1.1.4" evidence="1"/>
<dbReference type="EMBL" id="CP000934">
    <property type="protein sequence ID" value="ACE83294.1"/>
    <property type="molecule type" value="Genomic_DNA"/>
</dbReference>
<dbReference type="RefSeq" id="WP_012486134.1">
    <property type="nucleotide sequence ID" value="NC_010995.1"/>
</dbReference>
<dbReference type="SMR" id="B3PIB4"/>
<dbReference type="STRING" id="498211.CJA_0454"/>
<dbReference type="KEGG" id="cja:CJA_0454"/>
<dbReference type="eggNOG" id="COG0495">
    <property type="taxonomic scope" value="Bacteria"/>
</dbReference>
<dbReference type="HOGENOM" id="CLU_004427_0_0_6"/>
<dbReference type="OrthoDB" id="9810365at2"/>
<dbReference type="Proteomes" id="UP000001036">
    <property type="component" value="Chromosome"/>
</dbReference>
<dbReference type="GO" id="GO:0005829">
    <property type="term" value="C:cytosol"/>
    <property type="evidence" value="ECO:0007669"/>
    <property type="project" value="TreeGrafter"/>
</dbReference>
<dbReference type="GO" id="GO:0002161">
    <property type="term" value="F:aminoacyl-tRNA deacylase activity"/>
    <property type="evidence" value="ECO:0007669"/>
    <property type="project" value="InterPro"/>
</dbReference>
<dbReference type="GO" id="GO:0005524">
    <property type="term" value="F:ATP binding"/>
    <property type="evidence" value="ECO:0007669"/>
    <property type="project" value="UniProtKB-UniRule"/>
</dbReference>
<dbReference type="GO" id="GO:0004823">
    <property type="term" value="F:leucine-tRNA ligase activity"/>
    <property type="evidence" value="ECO:0007669"/>
    <property type="project" value="UniProtKB-UniRule"/>
</dbReference>
<dbReference type="GO" id="GO:0006429">
    <property type="term" value="P:leucyl-tRNA aminoacylation"/>
    <property type="evidence" value="ECO:0007669"/>
    <property type="project" value="UniProtKB-UniRule"/>
</dbReference>
<dbReference type="CDD" id="cd07958">
    <property type="entry name" value="Anticodon_Ia_Leu_BEm"/>
    <property type="match status" value="1"/>
</dbReference>
<dbReference type="CDD" id="cd00812">
    <property type="entry name" value="LeuRS_core"/>
    <property type="match status" value="1"/>
</dbReference>
<dbReference type="FunFam" id="2.20.28.290:FF:000001">
    <property type="entry name" value="Leucine--tRNA ligase"/>
    <property type="match status" value="1"/>
</dbReference>
<dbReference type="FunFam" id="3.10.20.590:FF:000001">
    <property type="entry name" value="Leucine--tRNA ligase"/>
    <property type="match status" value="1"/>
</dbReference>
<dbReference type="FunFam" id="3.40.50.620:FF:000124">
    <property type="entry name" value="Leucine--tRNA ligase"/>
    <property type="match status" value="1"/>
</dbReference>
<dbReference type="FunFam" id="3.40.50.620:FF:000395">
    <property type="entry name" value="Leucine--tRNA ligase"/>
    <property type="match status" value="1"/>
</dbReference>
<dbReference type="FunFam" id="3.90.740.10:FF:000012">
    <property type="entry name" value="Leucine--tRNA ligase"/>
    <property type="match status" value="1"/>
</dbReference>
<dbReference type="FunFam" id="1.10.730.10:FF:000011">
    <property type="entry name" value="Leucine--tRNA ligase chloroplastic/mitochondrial"/>
    <property type="match status" value="1"/>
</dbReference>
<dbReference type="Gene3D" id="2.20.28.290">
    <property type="match status" value="1"/>
</dbReference>
<dbReference type="Gene3D" id="3.10.20.590">
    <property type="match status" value="1"/>
</dbReference>
<dbReference type="Gene3D" id="3.40.50.620">
    <property type="entry name" value="HUPs"/>
    <property type="match status" value="1"/>
</dbReference>
<dbReference type="Gene3D" id="1.10.730.10">
    <property type="entry name" value="Isoleucyl-tRNA Synthetase, Domain 1"/>
    <property type="match status" value="1"/>
</dbReference>
<dbReference type="Gene3D" id="3.90.740.10">
    <property type="entry name" value="Valyl/Leucyl/Isoleucyl-tRNA synthetase, editing domain"/>
    <property type="match status" value="1"/>
</dbReference>
<dbReference type="HAMAP" id="MF_00049_B">
    <property type="entry name" value="Leu_tRNA_synth_B"/>
    <property type="match status" value="1"/>
</dbReference>
<dbReference type="InterPro" id="IPR001412">
    <property type="entry name" value="aa-tRNA-synth_I_CS"/>
</dbReference>
<dbReference type="InterPro" id="IPR002300">
    <property type="entry name" value="aa-tRNA-synth_Ia"/>
</dbReference>
<dbReference type="InterPro" id="IPR002302">
    <property type="entry name" value="Leu-tRNA-ligase"/>
</dbReference>
<dbReference type="InterPro" id="IPR025709">
    <property type="entry name" value="Leu_tRNA-synth_edit"/>
</dbReference>
<dbReference type="InterPro" id="IPR013155">
    <property type="entry name" value="M/V/L/I-tRNA-synth_anticd-bd"/>
</dbReference>
<dbReference type="InterPro" id="IPR015413">
    <property type="entry name" value="Methionyl/Leucyl_tRNA_Synth"/>
</dbReference>
<dbReference type="InterPro" id="IPR014729">
    <property type="entry name" value="Rossmann-like_a/b/a_fold"/>
</dbReference>
<dbReference type="InterPro" id="IPR009080">
    <property type="entry name" value="tRNAsynth_Ia_anticodon-bd"/>
</dbReference>
<dbReference type="InterPro" id="IPR009008">
    <property type="entry name" value="Val/Leu/Ile-tRNA-synth_edit"/>
</dbReference>
<dbReference type="NCBIfam" id="TIGR00396">
    <property type="entry name" value="leuS_bact"/>
    <property type="match status" value="1"/>
</dbReference>
<dbReference type="PANTHER" id="PTHR43740:SF2">
    <property type="entry name" value="LEUCINE--TRNA LIGASE, MITOCHONDRIAL"/>
    <property type="match status" value="1"/>
</dbReference>
<dbReference type="PANTHER" id="PTHR43740">
    <property type="entry name" value="LEUCYL-TRNA SYNTHETASE"/>
    <property type="match status" value="1"/>
</dbReference>
<dbReference type="Pfam" id="PF08264">
    <property type="entry name" value="Anticodon_1"/>
    <property type="match status" value="1"/>
</dbReference>
<dbReference type="Pfam" id="PF00133">
    <property type="entry name" value="tRNA-synt_1"/>
    <property type="match status" value="2"/>
</dbReference>
<dbReference type="Pfam" id="PF13603">
    <property type="entry name" value="tRNA-synt_1_2"/>
    <property type="match status" value="1"/>
</dbReference>
<dbReference type="Pfam" id="PF09334">
    <property type="entry name" value="tRNA-synt_1g"/>
    <property type="match status" value="1"/>
</dbReference>
<dbReference type="PRINTS" id="PR00985">
    <property type="entry name" value="TRNASYNTHLEU"/>
</dbReference>
<dbReference type="SUPFAM" id="SSF47323">
    <property type="entry name" value="Anticodon-binding domain of a subclass of class I aminoacyl-tRNA synthetases"/>
    <property type="match status" value="1"/>
</dbReference>
<dbReference type="SUPFAM" id="SSF52374">
    <property type="entry name" value="Nucleotidylyl transferase"/>
    <property type="match status" value="1"/>
</dbReference>
<dbReference type="SUPFAM" id="SSF50677">
    <property type="entry name" value="ValRS/IleRS/LeuRS editing domain"/>
    <property type="match status" value="1"/>
</dbReference>
<dbReference type="PROSITE" id="PS00178">
    <property type="entry name" value="AA_TRNA_LIGASE_I"/>
    <property type="match status" value="1"/>
</dbReference>
<evidence type="ECO:0000255" key="1">
    <source>
        <dbReference type="HAMAP-Rule" id="MF_00049"/>
    </source>
</evidence>
<organism>
    <name type="scientific">Cellvibrio japonicus (strain Ueda107)</name>
    <name type="common">Pseudomonas fluorescens subsp. cellulosa</name>
    <dbReference type="NCBI Taxonomy" id="498211"/>
    <lineage>
        <taxon>Bacteria</taxon>
        <taxon>Pseudomonadati</taxon>
        <taxon>Pseudomonadota</taxon>
        <taxon>Gammaproteobacteria</taxon>
        <taxon>Cellvibrionales</taxon>
        <taxon>Cellvibrionaceae</taxon>
        <taxon>Cellvibrio</taxon>
    </lineage>
</organism>